<evidence type="ECO:0000255" key="1">
    <source>
        <dbReference type="HAMAP-Rule" id="MF_01315"/>
    </source>
</evidence>
<evidence type="ECO:0000256" key="2">
    <source>
        <dbReference type="SAM" id="MobiDB-lite"/>
    </source>
</evidence>
<evidence type="ECO:0000305" key="3"/>
<keyword id="KW-1185">Reference proteome</keyword>
<keyword id="KW-0687">Ribonucleoprotein</keyword>
<keyword id="KW-0689">Ribosomal protein</keyword>
<keyword id="KW-0694">RNA-binding</keyword>
<keyword id="KW-0699">rRNA-binding</keyword>
<keyword id="KW-0820">tRNA-binding</keyword>
<comment type="function">
    <text evidence="1">Located at the top of the head of the 30S subunit, it contacts several helices of the 16S rRNA. In the 70S ribosome it contacts the 23S rRNA (bridge B1a) and protein L5 of the 50S subunit (bridge B1b), connecting the 2 subunits; these bridges are implicated in subunit movement. Contacts the tRNAs in the A and P-sites.</text>
</comment>
<comment type="subunit">
    <text evidence="1">Part of the 30S ribosomal subunit. Forms a loose heterodimer with protein S19. Forms two bridges to the 50S subunit in the 70S ribosome.</text>
</comment>
<comment type="similarity">
    <text evidence="1">Belongs to the universal ribosomal protein uS13 family.</text>
</comment>
<dbReference type="EMBL" id="CP000020">
    <property type="protein sequence ID" value="AAW84754.1"/>
    <property type="molecule type" value="Genomic_DNA"/>
</dbReference>
<dbReference type="RefSeq" id="WP_005417266.1">
    <property type="nucleotide sequence ID" value="NZ_CAWLES010000001.1"/>
</dbReference>
<dbReference type="RefSeq" id="YP_203642.1">
    <property type="nucleotide sequence ID" value="NC_006840.2"/>
</dbReference>
<dbReference type="SMR" id="Q5E892"/>
<dbReference type="STRING" id="312309.VF_0259"/>
<dbReference type="EnsemblBacteria" id="AAW84754">
    <property type="protein sequence ID" value="AAW84754"/>
    <property type="gene ID" value="VF_0259"/>
</dbReference>
<dbReference type="GeneID" id="54162880"/>
<dbReference type="KEGG" id="vfi:VF_0259"/>
<dbReference type="PATRIC" id="fig|312309.11.peg.254"/>
<dbReference type="eggNOG" id="COG0099">
    <property type="taxonomic scope" value="Bacteria"/>
</dbReference>
<dbReference type="HOGENOM" id="CLU_103849_1_2_6"/>
<dbReference type="OrthoDB" id="9803610at2"/>
<dbReference type="Proteomes" id="UP000000537">
    <property type="component" value="Chromosome I"/>
</dbReference>
<dbReference type="GO" id="GO:0005829">
    <property type="term" value="C:cytosol"/>
    <property type="evidence" value="ECO:0007669"/>
    <property type="project" value="TreeGrafter"/>
</dbReference>
<dbReference type="GO" id="GO:0015935">
    <property type="term" value="C:small ribosomal subunit"/>
    <property type="evidence" value="ECO:0007669"/>
    <property type="project" value="TreeGrafter"/>
</dbReference>
<dbReference type="GO" id="GO:0019843">
    <property type="term" value="F:rRNA binding"/>
    <property type="evidence" value="ECO:0007669"/>
    <property type="project" value="UniProtKB-UniRule"/>
</dbReference>
<dbReference type="GO" id="GO:0003735">
    <property type="term" value="F:structural constituent of ribosome"/>
    <property type="evidence" value="ECO:0007669"/>
    <property type="project" value="InterPro"/>
</dbReference>
<dbReference type="GO" id="GO:0000049">
    <property type="term" value="F:tRNA binding"/>
    <property type="evidence" value="ECO:0007669"/>
    <property type="project" value="UniProtKB-UniRule"/>
</dbReference>
<dbReference type="GO" id="GO:0006412">
    <property type="term" value="P:translation"/>
    <property type="evidence" value="ECO:0007669"/>
    <property type="project" value="UniProtKB-UniRule"/>
</dbReference>
<dbReference type="FunFam" id="1.10.8.50:FF:000001">
    <property type="entry name" value="30S ribosomal protein S13"/>
    <property type="match status" value="1"/>
</dbReference>
<dbReference type="FunFam" id="4.10.910.10:FF:000001">
    <property type="entry name" value="30S ribosomal protein S13"/>
    <property type="match status" value="1"/>
</dbReference>
<dbReference type="Gene3D" id="1.10.8.50">
    <property type="match status" value="1"/>
</dbReference>
<dbReference type="Gene3D" id="4.10.910.10">
    <property type="entry name" value="30s ribosomal protein s13, domain 2"/>
    <property type="match status" value="1"/>
</dbReference>
<dbReference type="HAMAP" id="MF_01315">
    <property type="entry name" value="Ribosomal_uS13"/>
    <property type="match status" value="1"/>
</dbReference>
<dbReference type="InterPro" id="IPR027437">
    <property type="entry name" value="Rbsml_uS13_C"/>
</dbReference>
<dbReference type="InterPro" id="IPR001892">
    <property type="entry name" value="Ribosomal_uS13"/>
</dbReference>
<dbReference type="InterPro" id="IPR010979">
    <property type="entry name" value="Ribosomal_uS13-like_H2TH"/>
</dbReference>
<dbReference type="InterPro" id="IPR019980">
    <property type="entry name" value="Ribosomal_uS13_bac-type"/>
</dbReference>
<dbReference type="InterPro" id="IPR018269">
    <property type="entry name" value="Ribosomal_uS13_CS"/>
</dbReference>
<dbReference type="NCBIfam" id="TIGR03631">
    <property type="entry name" value="uS13_bact"/>
    <property type="match status" value="1"/>
</dbReference>
<dbReference type="PANTHER" id="PTHR10871">
    <property type="entry name" value="30S RIBOSOMAL PROTEIN S13/40S RIBOSOMAL PROTEIN S18"/>
    <property type="match status" value="1"/>
</dbReference>
<dbReference type="PANTHER" id="PTHR10871:SF1">
    <property type="entry name" value="SMALL RIBOSOMAL SUBUNIT PROTEIN US13M"/>
    <property type="match status" value="1"/>
</dbReference>
<dbReference type="Pfam" id="PF00416">
    <property type="entry name" value="Ribosomal_S13"/>
    <property type="match status" value="1"/>
</dbReference>
<dbReference type="PIRSF" id="PIRSF002134">
    <property type="entry name" value="Ribosomal_S13"/>
    <property type="match status" value="1"/>
</dbReference>
<dbReference type="SUPFAM" id="SSF46946">
    <property type="entry name" value="S13-like H2TH domain"/>
    <property type="match status" value="1"/>
</dbReference>
<dbReference type="PROSITE" id="PS00646">
    <property type="entry name" value="RIBOSOMAL_S13_1"/>
    <property type="match status" value="1"/>
</dbReference>
<dbReference type="PROSITE" id="PS50159">
    <property type="entry name" value="RIBOSOMAL_S13_2"/>
    <property type="match status" value="1"/>
</dbReference>
<organism>
    <name type="scientific">Aliivibrio fischeri (strain ATCC 700601 / ES114)</name>
    <name type="common">Vibrio fischeri</name>
    <dbReference type="NCBI Taxonomy" id="312309"/>
    <lineage>
        <taxon>Bacteria</taxon>
        <taxon>Pseudomonadati</taxon>
        <taxon>Pseudomonadota</taxon>
        <taxon>Gammaproteobacteria</taxon>
        <taxon>Vibrionales</taxon>
        <taxon>Vibrionaceae</taxon>
        <taxon>Aliivibrio</taxon>
    </lineage>
</organism>
<gene>
    <name evidence="1" type="primary">rpsM</name>
    <name type="ordered locus">VF_0259</name>
</gene>
<accession>Q5E892</accession>
<name>RS13_ALIF1</name>
<proteinExistence type="inferred from homology"/>
<feature type="chain" id="PRO_0000230579" description="Small ribosomal subunit protein uS13">
    <location>
        <begin position="1"/>
        <end position="118"/>
    </location>
</feature>
<feature type="region of interest" description="Disordered" evidence="2">
    <location>
        <begin position="94"/>
        <end position="118"/>
    </location>
</feature>
<protein>
    <recommendedName>
        <fullName evidence="1">Small ribosomal subunit protein uS13</fullName>
    </recommendedName>
    <alternativeName>
        <fullName evidence="3">30S ribosomal protein S13</fullName>
    </alternativeName>
</protein>
<reference key="1">
    <citation type="journal article" date="2005" name="Proc. Natl. Acad. Sci. U.S.A.">
        <title>Complete genome sequence of Vibrio fischeri: a symbiotic bacterium with pathogenic congeners.</title>
        <authorList>
            <person name="Ruby E.G."/>
            <person name="Urbanowski M."/>
            <person name="Campbell J."/>
            <person name="Dunn A."/>
            <person name="Faini M."/>
            <person name="Gunsalus R."/>
            <person name="Lostroh P."/>
            <person name="Lupp C."/>
            <person name="McCann J."/>
            <person name="Millikan D."/>
            <person name="Schaefer A."/>
            <person name="Stabb E."/>
            <person name="Stevens A."/>
            <person name="Visick K."/>
            <person name="Whistler C."/>
            <person name="Greenberg E.P."/>
        </authorList>
    </citation>
    <scope>NUCLEOTIDE SEQUENCE [LARGE SCALE GENOMIC DNA]</scope>
    <source>
        <strain>ATCC 700601 / ES114</strain>
    </source>
</reference>
<sequence length="118" mass="13284">MARIAGINIPDHKHAVIALTAIYGIGKTRSQAILAEVGIAEDVKISELNDEQIDILRDGVAKYTVEGDLRREVSMNIKRLMDLGCYRGLRHRRSLPLRGQRTKTNARTRKGPRKPIKK</sequence>